<reference key="1">
    <citation type="submission" date="2008-06" db="EMBL/GenBank/DDBJ databases">
        <title>Complete sequence of Chloroherpeton thalassium ATCC 35110.</title>
        <authorList>
            <consortium name="US DOE Joint Genome Institute"/>
            <person name="Lucas S."/>
            <person name="Copeland A."/>
            <person name="Lapidus A."/>
            <person name="Glavina del Rio T."/>
            <person name="Dalin E."/>
            <person name="Tice H."/>
            <person name="Bruce D."/>
            <person name="Goodwin L."/>
            <person name="Pitluck S."/>
            <person name="Schmutz J."/>
            <person name="Larimer F."/>
            <person name="Land M."/>
            <person name="Hauser L."/>
            <person name="Kyrpides N."/>
            <person name="Mikhailova N."/>
            <person name="Liu Z."/>
            <person name="Li T."/>
            <person name="Zhao F."/>
            <person name="Overmann J."/>
            <person name="Bryant D.A."/>
            <person name="Richardson P."/>
        </authorList>
    </citation>
    <scope>NUCLEOTIDE SEQUENCE [LARGE SCALE GENOMIC DNA]</scope>
    <source>
        <strain>ATCC 35110 / GB-78</strain>
    </source>
</reference>
<dbReference type="EC" id="7.1.1.-" evidence="1"/>
<dbReference type="EMBL" id="CP001100">
    <property type="protein sequence ID" value="ACF15004.1"/>
    <property type="molecule type" value="Genomic_DNA"/>
</dbReference>
<dbReference type="RefSeq" id="WP_012501086.1">
    <property type="nucleotide sequence ID" value="NC_011026.1"/>
</dbReference>
<dbReference type="SMR" id="B3QY38"/>
<dbReference type="STRING" id="517418.Ctha_2555"/>
<dbReference type="KEGG" id="cts:Ctha_2555"/>
<dbReference type="eggNOG" id="COG1007">
    <property type="taxonomic scope" value="Bacteria"/>
</dbReference>
<dbReference type="HOGENOM" id="CLU_007100_1_5_10"/>
<dbReference type="OrthoDB" id="9811718at2"/>
<dbReference type="Proteomes" id="UP000001208">
    <property type="component" value="Chromosome"/>
</dbReference>
<dbReference type="GO" id="GO:0005886">
    <property type="term" value="C:plasma membrane"/>
    <property type="evidence" value="ECO:0007669"/>
    <property type="project" value="UniProtKB-SubCell"/>
</dbReference>
<dbReference type="GO" id="GO:0008137">
    <property type="term" value="F:NADH dehydrogenase (ubiquinone) activity"/>
    <property type="evidence" value="ECO:0007669"/>
    <property type="project" value="InterPro"/>
</dbReference>
<dbReference type="GO" id="GO:0050136">
    <property type="term" value="F:NADH:ubiquinone reductase (non-electrogenic) activity"/>
    <property type="evidence" value="ECO:0007669"/>
    <property type="project" value="UniProtKB-UniRule"/>
</dbReference>
<dbReference type="GO" id="GO:0048038">
    <property type="term" value="F:quinone binding"/>
    <property type="evidence" value="ECO:0007669"/>
    <property type="project" value="UniProtKB-KW"/>
</dbReference>
<dbReference type="GO" id="GO:0042773">
    <property type="term" value="P:ATP synthesis coupled electron transport"/>
    <property type="evidence" value="ECO:0007669"/>
    <property type="project" value="InterPro"/>
</dbReference>
<dbReference type="HAMAP" id="MF_00445">
    <property type="entry name" value="NDH1_NuoN_1"/>
    <property type="match status" value="1"/>
</dbReference>
<dbReference type="InterPro" id="IPR010096">
    <property type="entry name" value="NADH-Q_OxRdtase_suN/2"/>
</dbReference>
<dbReference type="InterPro" id="IPR001750">
    <property type="entry name" value="ND/Mrp_TM"/>
</dbReference>
<dbReference type="NCBIfam" id="TIGR01770">
    <property type="entry name" value="NDH_I_N"/>
    <property type="match status" value="1"/>
</dbReference>
<dbReference type="PANTHER" id="PTHR22773">
    <property type="entry name" value="NADH DEHYDROGENASE"/>
    <property type="match status" value="1"/>
</dbReference>
<dbReference type="Pfam" id="PF00361">
    <property type="entry name" value="Proton_antipo_M"/>
    <property type="match status" value="1"/>
</dbReference>
<organism>
    <name type="scientific">Chloroherpeton thalassium (strain ATCC 35110 / GB-78)</name>
    <dbReference type="NCBI Taxonomy" id="517418"/>
    <lineage>
        <taxon>Bacteria</taxon>
        <taxon>Pseudomonadati</taxon>
        <taxon>Chlorobiota</taxon>
        <taxon>Chlorobiia</taxon>
        <taxon>Chlorobiales</taxon>
        <taxon>Chloroherpetonaceae</taxon>
        <taxon>Chloroherpeton</taxon>
    </lineage>
</organism>
<accession>B3QY38</accession>
<keyword id="KW-0997">Cell inner membrane</keyword>
<keyword id="KW-1003">Cell membrane</keyword>
<keyword id="KW-0472">Membrane</keyword>
<keyword id="KW-0520">NAD</keyword>
<keyword id="KW-0874">Quinone</keyword>
<keyword id="KW-1185">Reference proteome</keyword>
<keyword id="KW-1278">Translocase</keyword>
<keyword id="KW-0812">Transmembrane</keyword>
<keyword id="KW-1133">Transmembrane helix</keyword>
<keyword id="KW-0813">Transport</keyword>
<comment type="function">
    <text evidence="1">NDH-1 shuttles electrons from NADH, via FMN and iron-sulfur (Fe-S) centers, to quinones in the respiratory chain. The immediate electron acceptor for the enzyme in this species is believed to be a menaquinone. Couples the redox reaction to proton translocation (for every two electrons transferred, four hydrogen ions are translocated across the cytoplasmic membrane), and thus conserves the redox energy in a proton gradient.</text>
</comment>
<comment type="catalytic activity">
    <reaction evidence="1">
        <text>a quinone + NADH + 5 H(+)(in) = a quinol + NAD(+) + 4 H(+)(out)</text>
        <dbReference type="Rhea" id="RHEA:57888"/>
        <dbReference type="ChEBI" id="CHEBI:15378"/>
        <dbReference type="ChEBI" id="CHEBI:24646"/>
        <dbReference type="ChEBI" id="CHEBI:57540"/>
        <dbReference type="ChEBI" id="CHEBI:57945"/>
        <dbReference type="ChEBI" id="CHEBI:132124"/>
    </reaction>
</comment>
<comment type="subunit">
    <text evidence="1">NDH-1 is composed of 14 different subunits. Subunits NuoA, H, J, K, L, M, N constitute the membrane sector of the complex.</text>
</comment>
<comment type="subcellular location">
    <subcellularLocation>
        <location evidence="1">Cell inner membrane</location>
        <topology evidence="1">Multi-pass membrane protein</topology>
    </subcellularLocation>
</comment>
<comment type="similarity">
    <text evidence="1">Belongs to the complex I subunit 2 family.</text>
</comment>
<proteinExistence type="inferred from homology"/>
<sequence>MFQVPSAGEIQELIGALKTGASAFVPEIFLSGLFLLVVTIDLFRIPSKRTIIPAVSVIGLIISGYFVYLQHAIPPDEFFLGMYAVDPFAIFFKYLFIVSGVFAVLISIDSVEVNLPESRSLGEYYSLIVAMVLGMFLMASSTDLLMMFLSLEMVSIISYILVGYLKGQVRSSEAGLKYVIYGSVSSGLMIYGFSIIYGLTGETNIFAINEFLKHNEVDSITLMLGSLLILGGFGYKAGVVPFHFWSPDVYEGAPTPITAYLSVGSKAAGFAMLIRFFRVTIPTGAGSTDLLAFDWVTLLSVVSVVSMVLGNVVALWQSNVKRLLAYSSIAHAGYILLGVIVADDLGTQATLFYLAAYTIMNIGAFFVIILISNEIGSDDVNDYKGLGKKMPLAAASLTIFLVSLTGLPPTVGFIGKLMIFSALLAKGPVFVWLAVIGVLTSVVSLYFYFKIPLNMYLRESEDGSETEFNVGMLSNALVAFLMILTVVFGLYFTPLSVLAEESVKIIGAVVMN</sequence>
<evidence type="ECO:0000255" key="1">
    <source>
        <dbReference type="HAMAP-Rule" id="MF_00445"/>
    </source>
</evidence>
<protein>
    <recommendedName>
        <fullName evidence="1">NADH-quinone oxidoreductase subunit N 2</fullName>
        <ecNumber evidence="1">7.1.1.-</ecNumber>
    </recommendedName>
    <alternativeName>
        <fullName evidence="1">NADH dehydrogenase I subunit N 2</fullName>
    </alternativeName>
    <alternativeName>
        <fullName evidence="1">NDH-1 subunit N 2</fullName>
    </alternativeName>
</protein>
<gene>
    <name evidence="1" type="primary">nuoN2</name>
    <name type="ordered locus">Ctha_2555</name>
</gene>
<feature type="chain" id="PRO_0000391129" description="NADH-quinone oxidoreductase subunit N 2">
    <location>
        <begin position="1"/>
        <end position="512"/>
    </location>
</feature>
<feature type="transmembrane region" description="Helical" evidence="1">
    <location>
        <begin position="23"/>
        <end position="43"/>
    </location>
</feature>
<feature type="transmembrane region" description="Helical" evidence="1">
    <location>
        <begin position="50"/>
        <end position="70"/>
    </location>
</feature>
<feature type="transmembrane region" description="Helical" evidence="1">
    <location>
        <begin position="88"/>
        <end position="108"/>
    </location>
</feature>
<feature type="transmembrane region" description="Helical" evidence="1">
    <location>
        <begin position="120"/>
        <end position="140"/>
    </location>
</feature>
<feature type="transmembrane region" description="Helical" evidence="1">
    <location>
        <begin position="144"/>
        <end position="164"/>
    </location>
</feature>
<feature type="transmembrane region" description="Helical" evidence="1">
    <location>
        <begin position="179"/>
        <end position="199"/>
    </location>
</feature>
<feature type="transmembrane region" description="Helical" evidence="1">
    <location>
        <begin position="220"/>
        <end position="240"/>
    </location>
</feature>
<feature type="transmembrane region" description="Helical" evidence="1">
    <location>
        <begin position="254"/>
        <end position="274"/>
    </location>
</feature>
<feature type="transmembrane region" description="Helical" evidence="1">
    <location>
        <begin position="295"/>
        <end position="315"/>
    </location>
</feature>
<feature type="transmembrane region" description="Helical" evidence="1">
    <location>
        <begin position="323"/>
        <end position="343"/>
    </location>
</feature>
<feature type="transmembrane region" description="Helical" evidence="1">
    <location>
        <begin position="351"/>
        <end position="371"/>
    </location>
</feature>
<feature type="transmembrane region" description="Helical" evidence="1">
    <location>
        <begin position="394"/>
        <end position="414"/>
    </location>
</feature>
<feature type="transmembrane region" description="Helical" evidence="1">
    <location>
        <begin position="429"/>
        <end position="449"/>
    </location>
</feature>
<feature type="transmembrane region" description="Helical" evidence="1">
    <location>
        <begin position="477"/>
        <end position="497"/>
    </location>
</feature>
<name>NUON2_CHLT3</name>